<keyword id="KW-0648">Protein biosynthesis</keyword>
<keyword id="KW-0808">Transferase</keyword>
<reference key="1">
    <citation type="journal article" date="2009" name="PLoS ONE">
        <title>Genome sequence of the endosymbiont Rickettsia peacockii and comparison with virulent Rickettsia rickettsii: identification of virulence factors.</title>
        <authorList>
            <person name="Felsheim R.F."/>
            <person name="Kurtti T.J."/>
            <person name="Munderloh U.G."/>
        </authorList>
    </citation>
    <scope>NUCLEOTIDE SEQUENCE [LARGE SCALE GENOMIC DNA]</scope>
    <source>
        <strain>Rustic</strain>
    </source>
</reference>
<name>FMT_RICPU</name>
<gene>
    <name evidence="1" type="primary">fmt</name>
    <name type="ordered locus">RPR_01885</name>
</gene>
<proteinExistence type="inferred from homology"/>
<feature type="chain" id="PRO_1000203875" description="Methionyl-tRNA formyltransferase">
    <location>
        <begin position="1"/>
        <end position="303"/>
    </location>
</feature>
<feature type="binding site" evidence="1">
    <location>
        <begin position="108"/>
        <end position="111"/>
    </location>
    <ligand>
        <name>(6S)-5,6,7,8-tetrahydrofolate</name>
        <dbReference type="ChEBI" id="CHEBI:57453"/>
    </ligand>
</feature>
<organism>
    <name type="scientific">Rickettsia peacockii (strain Rustic)</name>
    <dbReference type="NCBI Taxonomy" id="562019"/>
    <lineage>
        <taxon>Bacteria</taxon>
        <taxon>Pseudomonadati</taxon>
        <taxon>Pseudomonadota</taxon>
        <taxon>Alphaproteobacteria</taxon>
        <taxon>Rickettsiales</taxon>
        <taxon>Rickettsiaceae</taxon>
        <taxon>Rickettsieae</taxon>
        <taxon>Rickettsia</taxon>
        <taxon>spotted fever group</taxon>
    </lineage>
</organism>
<protein>
    <recommendedName>
        <fullName evidence="1">Methionyl-tRNA formyltransferase</fullName>
        <ecNumber evidence="1">2.1.2.9</ecNumber>
    </recommendedName>
</protein>
<evidence type="ECO:0000255" key="1">
    <source>
        <dbReference type="HAMAP-Rule" id="MF_00182"/>
    </source>
</evidence>
<dbReference type="EC" id="2.1.2.9" evidence="1"/>
<dbReference type="EMBL" id="CP001227">
    <property type="protein sequence ID" value="ACR47239.1"/>
    <property type="molecule type" value="Genomic_DNA"/>
</dbReference>
<dbReference type="RefSeq" id="WP_012736517.1">
    <property type="nucleotide sequence ID" value="NC_012730.1"/>
</dbReference>
<dbReference type="SMR" id="C4K0Y8"/>
<dbReference type="KEGG" id="rpk:RPR_01885"/>
<dbReference type="HOGENOM" id="CLU_033347_1_1_5"/>
<dbReference type="Proteomes" id="UP000005015">
    <property type="component" value="Chromosome"/>
</dbReference>
<dbReference type="GO" id="GO:0005829">
    <property type="term" value="C:cytosol"/>
    <property type="evidence" value="ECO:0007669"/>
    <property type="project" value="TreeGrafter"/>
</dbReference>
<dbReference type="GO" id="GO:0004479">
    <property type="term" value="F:methionyl-tRNA formyltransferase activity"/>
    <property type="evidence" value="ECO:0007669"/>
    <property type="project" value="UniProtKB-UniRule"/>
</dbReference>
<dbReference type="CDD" id="cd08646">
    <property type="entry name" value="FMT_core_Met-tRNA-FMT_N"/>
    <property type="match status" value="1"/>
</dbReference>
<dbReference type="CDD" id="cd08704">
    <property type="entry name" value="Met_tRNA_FMT_C"/>
    <property type="match status" value="1"/>
</dbReference>
<dbReference type="Gene3D" id="3.40.50.12230">
    <property type="match status" value="1"/>
</dbReference>
<dbReference type="HAMAP" id="MF_00182">
    <property type="entry name" value="Formyl_trans"/>
    <property type="match status" value="1"/>
</dbReference>
<dbReference type="InterPro" id="IPR005794">
    <property type="entry name" value="Fmt"/>
</dbReference>
<dbReference type="InterPro" id="IPR005793">
    <property type="entry name" value="Formyl_trans_C"/>
</dbReference>
<dbReference type="InterPro" id="IPR002376">
    <property type="entry name" value="Formyl_transf_N"/>
</dbReference>
<dbReference type="InterPro" id="IPR036477">
    <property type="entry name" value="Formyl_transf_N_sf"/>
</dbReference>
<dbReference type="InterPro" id="IPR011034">
    <property type="entry name" value="Formyl_transferase-like_C_sf"/>
</dbReference>
<dbReference type="InterPro" id="IPR044135">
    <property type="entry name" value="Met-tRNA-FMT_C"/>
</dbReference>
<dbReference type="InterPro" id="IPR041711">
    <property type="entry name" value="Met-tRNA-FMT_N"/>
</dbReference>
<dbReference type="NCBIfam" id="TIGR00460">
    <property type="entry name" value="fmt"/>
    <property type="match status" value="1"/>
</dbReference>
<dbReference type="PANTHER" id="PTHR11138">
    <property type="entry name" value="METHIONYL-TRNA FORMYLTRANSFERASE"/>
    <property type="match status" value="1"/>
</dbReference>
<dbReference type="PANTHER" id="PTHR11138:SF5">
    <property type="entry name" value="METHIONYL-TRNA FORMYLTRANSFERASE, MITOCHONDRIAL"/>
    <property type="match status" value="1"/>
</dbReference>
<dbReference type="Pfam" id="PF02911">
    <property type="entry name" value="Formyl_trans_C"/>
    <property type="match status" value="1"/>
</dbReference>
<dbReference type="Pfam" id="PF00551">
    <property type="entry name" value="Formyl_trans_N"/>
    <property type="match status" value="1"/>
</dbReference>
<dbReference type="SUPFAM" id="SSF50486">
    <property type="entry name" value="FMT C-terminal domain-like"/>
    <property type="match status" value="1"/>
</dbReference>
<dbReference type="SUPFAM" id="SSF53328">
    <property type="entry name" value="Formyltransferase"/>
    <property type="match status" value="1"/>
</dbReference>
<sequence length="303" mass="33971">MKVIFMGTPEFAVPALKKLITHHEVKAVFTQQPKAKGRGLNLAKSPIHQLAFEHQIPVYTPSTLRNDEIINLINKVNADIIVVIAYGFIVPKAILEAKKYGCLNIHPSDLPRHRGAAPLQRTIIEGDRKSSVCIMRMDTGLDTGDILMKEDFDLEERITLEELHNKCANLGAELLIKTLANIDNIVPITQPSDGVTYAHKLTKAEGKINWHESAYKIDCKIRGMNPWPGVYFSYNDKIIKILEAEYLNADHHFTSGTVISDKLEIACGSGILRVKKLQQESKKALNIEEFLRGTNILKDTVLK</sequence>
<accession>C4K0Y8</accession>
<comment type="function">
    <text evidence="1">Attaches a formyl group to the free amino group of methionyl-tRNA(fMet). The formyl group appears to play a dual role in the initiator identity of N-formylmethionyl-tRNA by promoting its recognition by IF2 and preventing the misappropriation of this tRNA by the elongation apparatus.</text>
</comment>
<comment type="catalytic activity">
    <reaction evidence="1">
        <text>L-methionyl-tRNA(fMet) + (6R)-10-formyltetrahydrofolate = N-formyl-L-methionyl-tRNA(fMet) + (6S)-5,6,7,8-tetrahydrofolate + H(+)</text>
        <dbReference type="Rhea" id="RHEA:24380"/>
        <dbReference type="Rhea" id="RHEA-COMP:9952"/>
        <dbReference type="Rhea" id="RHEA-COMP:9953"/>
        <dbReference type="ChEBI" id="CHEBI:15378"/>
        <dbReference type="ChEBI" id="CHEBI:57453"/>
        <dbReference type="ChEBI" id="CHEBI:78530"/>
        <dbReference type="ChEBI" id="CHEBI:78844"/>
        <dbReference type="ChEBI" id="CHEBI:195366"/>
        <dbReference type="EC" id="2.1.2.9"/>
    </reaction>
</comment>
<comment type="similarity">
    <text evidence="1">Belongs to the Fmt family.</text>
</comment>